<name>GPAT4_PONAB</name>
<keyword id="KW-0012">Acyltransferase</keyword>
<keyword id="KW-0256">Endoplasmic reticulum</keyword>
<keyword id="KW-0325">Glycoprotein</keyword>
<keyword id="KW-0444">Lipid biosynthesis</keyword>
<keyword id="KW-0443">Lipid metabolism</keyword>
<keyword id="KW-0472">Membrane</keyword>
<keyword id="KW-0594">Phospholipid biosynthesis</keyword>
<keyword id="KW-1208">Phospholipid metabolism</keyword>
<keyword id="KW-1185">Reference proteome</keyword>
<keyword id="KW-0732">Signal</keyword>
<keyword id="KW-0808">Transferase</keyword>
<keyword id="KW-0812">Transmembrane</keyword>
<keyword id="KW-1133">Transmembrane helix</keyword>
<organism>
    <name type="scientific">Pongo abelii</name>
    <name type="common">Sumatran orangutan</name>
    <name type="synonym">Pongo pygmaeus abelii</name>
    <dbReference type="NCBI Taxonomy" id="9601"/>
    <lineage>
        <taxon>Eukaryota</taxon>
        <taxon>Metazoa</taxon>
        <taxon>Chordata</taxon>
        <taxon>Craniata</taxon>
        <taxon>Vertebrata</taxon>
        <taxon>Euteleostomi</taxon>
        <taxon>Mammalia</taxon>
        <taxon>Eutheria</taxon>
        <taxon>Euarchontoglires</taxon>
        <taxon>Primates</taxon>
        <taxon>Haplorrhini</taxon>
        <taxon>Catarrhini</taxon>
        <taxon>Hominidae</taxon>
        <taxon>Pongo</taxon>
    </lineage>
</organism>
<sequence length="456" mass="52085">MFLLLPFDSLIVNLLGISLTVLFTLLLVFIIVPAIFGVSFGIRKLYMKTLLKIFAWATLRMERGAKEKNHQLYKPYTNGIIAKDPTSLEEEIKEIRRSGSSKALDNTPEFELSDIFYFCRKGMETIMDDEVTKRFSAEELESWNLLSRTNYNFQYISLRLTVLWGLGVLIRYCFLLPLRIALAFTGISLLVVGTTVVGYLPNGRFKEFMSKHVHLMCYRICVRALTAIITYHDRENRPRNGGICVANHTSPIDVIILASDGYYAMVGQVHGGLMGVIQRAMVKACPHVWFERSEVKDRHLVAKRLTEHVQDKSKLPILIFPEGTCINNTSVMMFKKGSFEIGATVYPVAIKYDPQFGDAFWNSSKYGMVTYLLRMMTSWAIVCSVWYLPPMTREADEDAVQFANRVKSAIARQGGLVDLLWDGGLKREKVKDTFKEEQQKLYSKMIVGNHKDRSRS</sequence>
<accession>Q5R6J7</accession>
<reference key="1">
    <citation type="submission" date="2004-11" db="EMBL/GenBank/DDBJ databases">
        <authorList>
            <consortium name="The German cDNA consortium"/>
        </authorList>
    </citation>
    <scope>NUCLEOTIDE SEQUENCE [LARGE SCALE MRNA]</scope>
    <source>
        <tissue>Kidney</tissue>
    </source>
</reference>
<protein>
    <recommendedName>
        <fullName evidence="1">Glycerol-3-phosphate acyltransferase 4</fullName>
        <shortName>GPAT4</shortName>
        <ecNumber evidence="1">2.3.1.15</ecNumber>
    </recommendedName>
    <alternativeName>
        <fullName>1-acylglycerol-3-phosphate O-acyltransferase 6</fullName>
        <shortName>1-AGP acyltransferase 6</shortName>
        <shortName>1-AGPAT 6</shortName>
    </alternativeName>
    <alternativeName>
        <fullName>Acyl-CoA:glycerol-3-phosphate acyltransferase 4</fullName>
    </alternativeName>
    <alternativeName>
        <fullName>Lysophosphatidic acid acyltransferase zeta</fullName>
        <shortName>LPAAT-zeta</shortName>
    </alternativeName>
</protein>
<feature type="signal peptide" evidence="3">
    <location>
        <begin position="1"/>
        <end position="37"/>
    </location>
</feature>
<feature type="chain" id="PRO_0000024705" description="Glycerol-3-phosphate acyltransferase 4">
    <location>
        <begin position="38"/>
        <end position="456"/>
    </location>
</feature>
<feature type="transmembrane region" description="Helical" evidence="3">
    <location>
        <begin position="156"/>
        <end position="176"/>
    </location>
</feature>
<feature type="transmembrane region" description="Helical" evidence="3">
    <location>
        <begin position="180"/>
        <end position="200"/>
    </location>
</feature>
<feature type="short sequence motif" description="HXXXXD motif" evidence="2">
    <location>
        <begin position="248"/>
        <end position="253"/>
    </location>
</feature>
<feature type="glycosylation site" description="N-linked (GlcNAc...) asparagine" evidence="3">
    <location>
        <position position="247"/>
    </location>
</feature>
<feature type="glycosylation site" description="N-linked (GlcNAc...) asparagine" evidence="3">
    <location>
        <position position="327"/>
    </location>
</feature>
<feature type="glycosylation site" description="N-linked (GlcNAc...) asparagine" evidence="3">
    <location>
        <position position="328"/>
    </location>
</feature>
<feature type="glycosylation site" description="N-linked (GlcNAc...) asparagine" evidence="3">
    <location>
        <position position="362"/>
    </location>
</feature>
<proteinExistence type="evidence at transcript level"/>
<evidence type="ECO:0000250" key="1">
    <source>
        <dbReference type="UniProtKB" id="Q86UL3"/>
    </source>
</evidence>
<evidence type="ECO:0000250" key="2">
    <source>
        <dbReference type="UniProtKB" id="Q9D517"/>
    </source>
</evidence>
<evidence type="ECO:0000255" key="3"/>
<evidence type="ECO:0000305" key="4"/>
<comment type="function">
    <text evidence="1">Converts glycerol-3-phosphate to 1-acyl-sn-glycerol-3-phosphate (lysophosphatidic acid or LPA) by incorporating an acyl moiety at the sn-1 position of the glycerol backbone. Active against both saturated and unsaturated long-chain fatty acyl-CoAs. Protects cells against lipotoxicity.</text>
</comment>
<comment type="catalytic activity">
    <reaction evidence="1">
        <text>sn-glycerol 3-phosphate + an acyl-CoA = a 1-acyl-sn-glycero-3-phosphate + CoA</text>
        <dbReference type="Rhea" id="RHEA:15325"/>
        <dbReference type="ChEBI" id="CHEBI:57287"/>
        <dbReference type="ChEBI" id="CHEBI:57597"/>
        <dbReference type="ChEBI" id="CHEBI:57970"/>
        <dbReference type="ChEBI" id="CHEBI:58342"/>
        <dbReference type="EC" id="2.3.1.15"/>
    </reaction>
    <physiologicalReaction direction="left-to-right" evidence="1">
        <dbReference type="Rhea" id="RHEA:15326"/>
    </physiologicalReaction>
</comment>
<comment type="catalytic activity">
    <reaction evidence="1">
        <text>dodecanoyl-CoA + sn-glycerol 3-phosphate = 1-dodecanoyl-sn-glycerol 3-phosphate + CoA</text>
        <dbReference type="Rhea" id="RHEA:35727"/>
        <dbReference type="ChEBI" id="CHEBI:57287"/>
        <dbReference type="ChEBI" id="CHEBI:57375"/>
        <dbReference type="ChEBI" id="CHEBI:57597"/>
        <dbReference type="ChEBI" id="CHEBI:72682"/>
    </reaction>
    <physiologicalReaction direction="left-to-right" evidence="1">
        <dbReference type="Rhea" id="RHEA:35728"/>
    </physiologicalReaction>
</comment>
<comment type="catalytic activity">
    <reaction evidence="1">
        <text>sn-glycerol 3-phosphate + hexadecanoyl-CoA = 1-hexadecanoyl-sn-glycero-3-phosphate + CoA</text>
        <dbReference type="Rhea" id="RHEA:35723"/>
        <dbReference type="ChEBI" id="CHEBI:57287"/>
        <dbReference type="ChEBI" id="CHEBI:57379"/>
        <dbReference type="ChEBI" id="CHEBI:57518"/>
        <dbReference type="ChEBI" id="CHEBI:57597"/>
    </reaction>
    <physiologicalReaction direction="left-to-right" evidence="1">
        <dbReference type="Rhea" id="RHEA:35724"/>
    </physiologicalReaction>
</comment>
<comment type="catalytic activity">
    <reaction evidence="1">
        <text>sn-glycerol 3-phosphate + octadecanoyl-CoA = 1-octadecanoyl-sn-glycero-3-phosphate + CoA</text>
        <dbReference type="Rhea" id="RHEA:37195"/>
        <dbReference type="ChEBI" id="CHEBI:57287"/>
        <dbReference type="ChEBI" id="CHEBI:57394"/>
        <dbReference type="ChEBI" id="CHEBI:57597"/>
        <dbReference type="ChEBI" id="CHEBI:74565"/>
    </reaction>
    <physiologicalReaction direction="left-to-right" evidence="1">
        <dbReference type="Rhea" id="RHEA:37196"/>
    </physiologicalReaction>
</comment>
<comment type="catalytic activity">
    <reaction evidence="1">
        <text>sn-glycerol 3-phosphate + (9Z)-octadecenoyl-CoA = 1-(9Z-octadecenoyl)-sn-glycero-3-phosphate + CoA</text>
        <dbReference type="Rhea" id="RHEA:37199"/>
        <dbReference type="ChEBI" id="CHEBI:57287"/>
        <dbReference type="ChEBI" id="CHEBI:57387"/>
        <dbReference type="ChEBI" id="CHEBI:57597"/>
        <dbReference type="ChEBI" id="CHEBI:74544"/>
    </reaction>
    <physiologicalReaction direction="left-to-right" evidence="1">
        <dbReference type="Rhea" id="RHEA:37200"/>
    </physiologicalReaction>
</comment>
<comment type="catalytic activity">
    <reaction evidence="1">
        <text>(9Z,12Z)-octadecadienoyl-CoA + sn-glycerol 3-phosphate = 1-(9Z,12Z)-octadecadienoyl-sn-glycero-3-phosphate + CoA</text>
        <dbReference type="Rhea" id="RHEA:37203"/>
        <dbReference type="ChEBI" id="CHEBI:57287"/>
        <dbReference type="ChEBI" id="CHEBI:57383"/>
        <dbReference type="ChEBI" id="CHEBI:57597"/>
        <dbReference type="ChEBI" id="CHEBI:74547"/>
    </reaction>
    <physiologicalReaction direction="left-to-right" evidence="1">
        <dbReference type="Rhea" id="RHEA:37204"/>
    </physiologicalReaction>
</comment>
<comment type="pathway">
    <text>Phospholipid metabolism; CDP-diacylglycerol biosynthesis; CDP-diacylglycerol from sn-glycerol 3-phosphate: step 1/3.</text>
</comment>
<comment type="subcellular location">
    <subcellularLocation>
        <location evidence="1">Endoplasmic reticulum membrane</location>
        <topology evidence="3">Multi-pass membrane protein</topology>
    </subcellularLocation>
</comment>
<comment type="domain">
    <text evidence="2">The HXXXXD motif is essential for acyltransferase activity and may constitute the binding site for the phosphate moiety of the glycerol-3-phosphate.</text>
</comment>
<comment type="similarity">
    <text evidence="4">Belongs to the 1-acyl-sn-glycerol-3-phosphate acyltransferase family.</text>
</comment>
<comment type="sequence caution" evidence="4">
    <conflict type="erroneous initiation">
        <sequence resource="EMBL-CDS" id="CAH92613"/>
    </conflict>
</comment>
<dbReference type="EC" id="2.3.1.15" evidence="1"/>
<dbReference type="EMBL" id="CR860492">
    <property type="protein sequence ID" value="CAH92613.1"/>
    <property type="status" value="ALT_INIT"/>
    <property type="molecule type" value="mRNA"/>
</dbReference>
<dbReference type="RefSeq" id="NP_001126531.1">
    <property type="nucleotide sequence ID" value="NM_001133059.1"/>
</dbReference>
<dbReference type="RefSeq" id="XP_009242025.1">
    <property type="nucleotide sequence ID" value="XM_009243750.1"/>
</dbReference>
<dbReference type="RefSeq" id="XP_024106375.1">
    <property type="nucleotide sequence ID" value="XM_024250607.2"/>
</dbReference>
<dbReference type="RefSeq" id="XP_054416936.1">
    <property type="nucleotide sequence ID" value="XM_054560961.2"/>
</dbReference>
<dbReference type="RefSeq" id="XP_054416937.1">
    <property type="nucleotide sequence ID" value="XM_054560962.1"/>
</dbReference>
<dbReference type="RefSeq" id="XP_054416938.1">
    <property type="nucleotide sequence ID" value="XM_054560963.2"/>
</dbReference>
<dbReference type="RefSeq" id="XP_063582391.1">
    <property type="nucleotide sequence ID" value="XM_063726321.1"/>
</dbReference>
<dbReference type="RefSeq" id="XP_063582392.1">
    <property type="nucleotide sequence ID" value="XM_063726322.1"/>
</dbReference>
<dbReference type="FunCoup" id="Q5R6J7">
    <property type="interactions" value="2398"/>
</dbReference>
<dbReference type="STRING" id="9601.ENSPPYP00000020792"/>
<dbReference type="GlyCosmos" id="Q5R6J7">
    <property type="glycosylation" value="4 sites, No reported glycans"/>
</dbReference>
<dbReference type="GeneID" id="100173520"/>
<dbReference type="KEGG" id="pon:100173520"/>
<dbReference type="CTD" id="137964"/>
<dbReference type="eggNOG" id="KOG2898">
    <property type="taxonomic scope" value="Eukaryota"/>
</dbReference>
<dbReference type="HOGENOM" id="CLU_031080_0_1_1"/>
<dbReference type="InParanoid" id="Q5R6J7"/>
<dbReference type="OrthoDB" id="10051137at2759"/>
<dbReference type="TreeFam" id="TF315039"/>
<dbReference type="UniPathway" id="UPA00557">
    <property type="reaction ID" value="UER00612"/>
</dbReference>
<dbReference type="Proteomes" id="UP000001595">
    <property type="component" value="Chromosome 8"/>
</dbReference>
<dbReference type="GO" id="GO:0005783">
    <property type="term" value="C:endoplasmic reticulum"/>
    <property type="evidence" value="ECO:0000250"/>
    <property type="project" value="UniProtKB"/>
</dbReference>
<dbReference type="GO" id="GO:0005789">
    <property type="term" value="C:endoplasmic reticulum membrane"/>
    <property type="evidence" value="ECO:0007669"/>
    <property type="project" value="UniProtKB-SubCell"/>
</dbReference>
<dbReference type="GO" id="GO:0004366">
    <property type="term" value="F:glycerol-3-phosphate O-acyltransferase activity"/>
    <property type="evidence" value="ECO:0007669"/>
    <property type="project" value="UniProtKB-EC"/>
</dbReference>
<dbReference type="GO" id="GO:0042171">
    <property type="term" value="F:lysophosphatidic acid acyltransferase activity"/>
    <property type="evidence" value="ECO:0007669"/>
    <property type="project" value="UniProtKB-ARBA"/>
</dbReference>
<dbReference type="GO" id="GO:0016024">
    <property type="term" value="P:CDP-diacylglycerol biosynthetic process"/>
    <property type="evidence" value="ECO:0007669"/>
    <property type="project" value="UniProtKB-UniPathway"/>
</dbReference>
<dbReference type="GO" id="GO:0007595">
    <property type="term" value="P:lactation"/>
    <property type="evidence" value="ECO:0000250"/>
    <property type="project" value="UniProtKB"/>
</dbReference>
<dbReference type="GO" id="GO:0008610">
    <property type="term" value="P:lipid biosynthetic process"/>
    <property type="evidence" value="ECO:0000250"/>
    <property type="project" value="UniProtKB"/>
</dbReference>
<dbReference type="GO" id="GO:0019432">
    <property type="term" value="P:triglyceride biosynthetic process"/>
    <property type="evidence" value="ECO:0000250"/>
    <property type="project" value="UniProtKB"/>
</dbReference>
<dbReference type="CDD" id="cd07991">
    <property type="entry name" value="LPLAT_LPCAT1-like"/>
    <property type="match status" value="1"/>
</dbReference>
<dbReference type="InterPro" id="IPR045252">
    <property type="entry name" value="LPCAT1-like"/>
</dbReference>
<dbReference type="InterPro" id="IPR002123">
    <property type="entry name" value="Plipid/glycerol_acylTrfase"/>
</dbReference>
<dbReference type="PANTHER" id="PTHR23063:SF37">
    <property type="entry name" value="GLYCEROL-3-PHOSPHATE ACYLTRANSFERASE 4"/>
    <property type="match status" value="1"/>
</dbReference>
<dbReference type="PANTHER" id="PTHR23063">
    <property type="entry name" value="PHOSPHOLIPID ACYLTRANSFERASE"/>
    <property type="match status" value="1"/>
</dbReference>
<dbReference type="Pfam" id="PF01553">
    <property type="entry name" value="Acyltransferase"/>
    <property type="match status" value="1"/>
</dbReference>
<dbReference type="SMART" id="SM00563">
    <property type="entry name" value="PlsC"/>
    <property type="match status" value="1"/>
</dbReference>
<dbReference type="SUPFAM" id="SSF69593">
    <property type="entry name" value="Glycerol-3-phosphate (1)-acyltransferase"/>
    <property type="match status" value="1"/>
</dbReference>
<gene>
    <name evidence="1" type="primary">GPAT4</name>
    <name type="synonym">AGPAT6</name>
</gene>